<proteinExistence type="inferred from homology"/>
<comment type="similarity">
    <text evidence="1">Belongs to the UPF0215 family.</text>
</comment>
<dbReference type="EMBL" id="CP001398">
    <property type="protein sequence ID" value="ACS32850.1"/>
    <property type="molecule type" value="Genomic_DNA"/>
</dbReference>
<dbReference type="RefSeq" id="WP_015857968.1">
    <property type="nucleotide sequence ID" value="NC_012804.1"/>
</dbReference>
<dbReference type="SMR" id="C5A3N8"/>
<dbReference type="STRING" id="593117.TGAM_0348"/>
<dbReference type="PaxDb" id="593117-TGAM_0348"/>
<dbReference type="GeneID" id="7987814"/>
<dbReference type="KEGG" id="tga:TGAM_0348"/>
<dbReference type="PATRIC" id="fig|593117.10.peg.346"/>
<dbReference type="eggNOG" id="arCOG00928">
    <property type="taxonomic scope" value="Archaea"/>
</dbReference>
<dbReference type="HOGENOM" id="CLU_095956_1_0_2"/>
<dbReference type="OrthoDB" id="15207at2157"/>
<dbReference type="Proteomes" id="UP000001488">
    <property type="component" value="Chromosome"/>
</dbReference>
<dbReference type="Gene3D" id="3.30.2170.10">
    <property type="entry name" value="archaeoglobus fulgidus dsm 4304 superfamily"/>
    <property type="match status" value="1"/>
</dbReference>
<dbReference type="HAMAP" id="MF_00582">
    <property type="entry name" value="UPF0215"/>
    <property type="match status" value="1"/>
</dbReference>
<dbReference type="InterPro" id="IPR002802">
    <property type="entry name" value="Endo_dU"/>
</dbReference>
<dbReference type="NCBIfam" id="NF001977">
    <property type="entry name" value="PRK00766.1"/>
    <property type="match status" value="1"/>
</dbReference>
<dbReference type="PANTHER" id="PTHR39518">
    <property type="entry name" value="UPF0215 PROTEIN MJ1150"/>
    <property type="match status" value="1"/>
</dbReference>
<dbReference type="PANTHER" id="PTHR39518:SF2">
    <property type="entry name" value="UPF0215 PROTEIN MJ1150"/>
    <property type="match status" value="1"/>
</dbReference>
<dbReference type="Pfam" id="PF01949">
    <property type="entry name" value="DUF99"/>
    <property type="match status" value="1"/>
</dbReference>
<dbReference type="PIRSF" id="PIRSF006380">
    <property type="entry name" value="UCP006380"/>
    <property type="match status" value="1"/>
</dbReference>
<protein>
    <recommendedName>
        <fullName evidence="1">UPF0215 protein TGAM_0348</fullName>
    </recommendedName>
</protein>
<feature type="chain" id="PRO_1000212139" description="UPF0215 protein TGAM_0348">
    <location>
        <begin position="1"/>
        <end position="195"/>
    </location>
</feature>
<name>Y348_THEGJ</name>
<reference key="1">
    <citation type="journal article" date="2007" name="Genome Biol.">
        <title>Genome analysis and genome-wide proteomics of Thermococcus gammatolerans, the most radioresistant organism known amongst the Archaea.</title>
        <authorList>
            <person name="Zivanovic Y."/>
            <person name="Armengaud J."/>
            <person name="Lagorce A."/>
            <person name="Leplat C."/>
            <person name="Guerin P."/>
            <person name="Dutertre M."/>
            <person name="Anthouard V."/>
            <person name="Forterre P."/>
            <person name="Wincker P."/>
            <person name="Confalonieri F."/>
        </authorList>
    </citation>
    <scope>NUCLEOTIDE SEQUENCE [LARGE SCALE GENOMIC DNA]</scope>
    <source>
        <strain>DSM 15229 / JCM 11827 / EJ3</strain>
    </source>
</reference>
<keyword id="KW-1185">Reference proteome</keyword>
<gene>
    <name type="ordered locus">TGAM_0348</name>
</gene>
<accession>C5A3N8</accession>
<organism>
    <name type="scientific">Thermococcus gammatolerans (strain DSM 15229 / JCM 11827 / EJ3)</name>
    <dbReference type="NCBI Taxonomy" id="593117"/>
    <lineage>
        <taxon>Archaea</taxon>
        <taxon>Methanobacteriati</taxon>
        <taxon>Methanobacteriota</taxon>
        <taxon>Thermococci</taxon>
        <taxon>Thermococcales</taxon>
        <taxon>Thermococcaceae</taxon>
        <taxon>Thermococcus</taxon>
    </lineage>
</organism>
<sequence length="195" mass="21714">MIRKVKPEIRVVGFDDGTFSFSSKVAHGRTILVGVVMKGAREVVGVLSRWITVDGTDATEKLIDAVVNSRFKDLRVIMLKGVTYGGFNIVDLDKLYLETGLPVLVVIRKKPDLRAMEAALRKHFPDWRERFEVLRRAPPLFELIPGKLYLQTVGLSPETAAEIVRTTTKTGLIPEPLRLAHMIASAVMTGESTKE</sequence>
<evidence type="ECO:0000255" key="1">
    <source>
        <dbReference type="HAMAP-Rule" id="MF_00582"/>
    </source>
</evidence>